<feature type="chain" id="PRO_1000058966" description="Sec-independent protein translocase protein TatA">
    <location>
        <begin position="1"/>
        <end position="54"/>
    </location>
</feature>
<feature type="transmembrane region" description="Helical" evidence="1">
    <location>
        <begin position="1"/>
        <end position="21"/>
    </location>
</feature>
<reference key="1">
    <citation type="submission" date="2007-09" db="EMBL/GenBank/DDBJ databases">
        <title>Complete genome sequence of Rickettsia canadensis.</title>
        <authorList>
            <person name="Madan A."/>
            <person name="Fahey J."/>
            <person name="Helton E."/>
            <person name="Ketteman M."/>
            <person name="Madan A."/>
            <person name="Rodrigues S."/>
            <person name="Sanchez A."/>
            <person name="Whiting M."/>
            <person name="Dasch G."/>
            <person name="Eremeeva M."/>
        </authorList>
    </citation>
    <scope>NUCLEOTIDE SEQUENCE [LARGE SCALE GENOMIC DNA]</scope>
    <source>
        <strain>McKiel</strain>
    </source>
</reference>
<protein>
    <recommendedName>
        <fullName evidence="1">Sec-independent protein translocase protein TatA</fullName>
    </recommendedName>
</protein>
<sequence length="54" mass="5925">MGMSFSHLLIVLLIIFVLFGAGKLPQVMSDLAKGLKAFKDGMKDDGNDNDRKNN</sequence>
<keyword id="KW-0997">Cell inner membrane</keyword>
<keyword id="KW-1003">Cell membrane</keyword>
<keyword id="KW-0472">Membrane</keyword>
<keyword id="KW-0653">Protein transport</keyword>
<keyword id="KW-0811">Translocation</keyword>
<keyword id="KW-0812">Transmembrane</keyword>
<keyword id="KW-1133">Transmembrane helix</keyword>
<keyword id="KW-0813">Transport</keyword>
<gene>
    <name evidence="1" type="primary">tatA</name>
    <name type="ordered locus">A1E_04805</name>
</gene>
<proteinExistence type="inferred from homology"/>
<name>TATA_RICCK</name>
<accession>A8EZU9</accession>
<comment type="function">
    <text evidence="1">Part of the twin-arginine translocation (Tat) system that transports large folded proteins containing a characteristic twin-arginine motif in their signal peptide across membranes. TatA could form the protein-conducting channel of the Tat system.</text>
</comment>
<comment type="subunit">
    <text evidence="1">The Tat system comprises two distinct complexes: a TatABC complex, containing multiple copies of TatA, TatB and TatC subunits, and a separate TatA complex, containing only TatA subunits. Substrates initially bind to the TatABC complex, which probably triggers association of the separate TatA complex to form the active translocon.</text>
</comment>
<comment type="subcellular location">
    <subcellularLocation>
        <location evidence="1">Cell inner membrane</location>
        <topology evidence="1">Single-pass membrane protein</topology>
    </subcellularLocation>
</comment>
<comment type="similarity">
    <text evidence="1">Belongs to the TatA/E family.</text>
</comment>
<dbReference type="EMBL" id="CP000409">
    <property type="protein sequence ID" value="ABV73882.1"/>
    <property type="molecule type" value="Genomic_DNA"/>
</dbReference>
<dbReference type="RefSeq" id="WP_012149077.1">
    <property type="nucleotide sequence ID" value="NC_009879.1"/>
</dbReference>
<dbReference type="SMR" id="A8EZU9"/>
<dbReference type="STRING" id="293613.A1E_04805"/>
<dbReference type="KEGG" id="rcm:A1E_04805"/>
<dbReference type="eggNOG" id="COG1826">
    <property type="taxonomic scope" value="Bacteria"/>
</dbReference>
<dbReference type="HOGENOM" id="CLU_086034_6_2_5"/>
<dbReference type="Proteomes" id="UP000007056">
    <property type="component" value="Chromosome"/>
</dbReference>
<dbReference type="GO" id="GO:0033281">
    <property type="term" value="C:TAT protein transport complex"/>
    <property type="evidence" value="ECO:0007669"/>
    <property type="project" value="UniProtKB-UniRule"/>
</dbReference>
<dbReference type="GO" id="GO:0008320">
    <property type="term" value="F:protein transmembrane transporter activity"/>
    <property type="evidence" value="ECO:0007669"/>
    <property type="project" value="UniProtKB-UniRule"/>
</dbReference>
<dbReference type="GO" id="GO:0043953">
    <property type="term" value="P:protein transport by the Tat complex"/>
    <property type="evidence" value="ECO:0007669"/>
    <property type="project" value="UniProtKB-UniRule"/>
</dbReference>
<dbReference type="Gene3D" id="1.20.5.3310">
    <property type="match status" value="1"/>
</dbReference>
<dbReference type="HAMAP" id="MF_00236">
    <property type="entry name" value="TatA_E"/>
    <property type="match status" value="1"/>
</dbReference>
<dbReference type="InterPro" id="IPR003369">
    <property type="entry name" value="TatA/B/E"/>
</dbReference>
<dbReference type="InterPro" id="IPR006312">
    <property type="entry name" value="TatA/E"/>
</dbReference>
<dbReference type="NCBIfam" id="NF002402">
    <property type="entry name" value="PRK01470.1"/>
    <property type="match status" value="1"/>
</dbReference>
<dbReference type="NCBIfam" id="TIGR01411">
    <property type="entry name" value="tatAE"/>
    <property type="match status" value="1"/>
</dbReference>
<dbReference type="PANTHER" id="PTHR42982">
    <property type="entry name" value="SEC-INDEPENDENT PROTEIN TRANSLOCASE PROTEIN TATA"/>
    <property type="match status" value="1"/>
</dbReference>
<dbReference type="PANTHER" id="PTHR42982:SF1">
    <property type="entry name" value="SEC-INDEPENDENT PROTEIN TRANSLOCASE PROTEIN TATA"/>
    <property type="match status" value="1"/>
</dbReference>
<dbReference type="Pfam" id="PF02416">
    <property type="entry name" value="TatA_B_E"/>
    <property type="match status" value="1"/>
</dbReference>
<organism>
    <name type="scientific">Rickettsia canadensis (strain McKiel)</name>
    <dbReference type="NCBI Taxonomy" id="293613"/>
    <lineage>
        <taxon>Bacteria</taxon>
        <taxon>Pseudomonadati</taxon>
        <taxon>Pseudomonadota</taxon>
        <taxon>Alphaproteobacteria</taxon>
        <taxon>Rickettsiales</taxon>
        <taxon>Rickettsiaceae</taxon>
        <taxon>Rickettsieae</taxon>
        <taxon>Rickettsia</taxon>
        <taxon>belli group</taxon>
    </lineage>
</organism>
<evidence type="ECO:0000255" key="1">
    <source>
        <dbReference type="HAMAP-Rule" id="MF_00236"/>
    </source>
</evidence>